<keyword id="KW-0217">Developmental protein</keyword>
<keyword id="KW-0238">DNA-binding</keyword>
<keyword id="KW-0302">Gap protein</keyword>
<keyword id="KW-0479">Metal-binding</keyword>
<keyword id="KW-0539">Nucleus</keyword>
<keyword id="KW-0677">Repeat</keyword>
<keyword id="KW-0862">Zinc</keyword>
<keyword id="KW-0863">Zinc-finger</keyword>
<reference key="1">
    <citation type="journal article" date="1997" name="Syst. Biol.">
        <title>Multiple sources of character information and the phylogeny of Hawaiian Drosophilids.</title>
        <authorList>
            <person name="Baker R.H."/>
            <person name="DeSalle R."/>
        </authorList>
    </citation>
    <scope>NUCLEOTIDE SEQUENCE [GENOMIC DNA]</scope>
</reference>
<comment type="function">
    <text evidence="1">Gap class segmentation protein that controls development of head structures.</text>
</comment>
<comment type="subcellular location">
    <subcellularLocation>
        <location evidence="1">Nucleus</location>
    </subcellularLocation>
</comment>
<comment type="similarity">
    <text evidence="3">Belongs to the hunchback C2H2-type zinc-finger protein family.</text>
</comment>
<evidence type="ECO:0000250" key="1"/>
<evidence type="ECO:0000256" key="2">
    <source>
        <dbReference type="SAM" id="MobiDB-lite"/>
    </source>
</evidence>
<evidence type="ECO:0000305" key="3"/>
<protein>
    <recommendedName>
        <fullName>Protein hunchback</fullName>
    </recommendedName>
</protein>
<dbReference type="EMBL" id="U92996">
    <property type="protein sequence ID" value="AAC03244.1"/>
    <property type="molecule type" value="Genomic_DNA"/>
</dbReference>
<dbReference type="EMBL" id="U92997">
    <property type="protein sequence ID" value="AAC03245.1"/>
    <property type="molecule type" value="Genomic_DNA"/>
</dbReference>
<dbReference type="SMR" id="O46232"/>
<dbReference type="GO" id="GO:0005634">
    <property type="term" value="C:nucleus"/>
    <property type="evidence" value="ECO:0007669"/>
    <property type="project" value="UniProtKB-SubCell"/>
</dbReference>
<dbReference type="GO" id="GO:0003677">
    <property type="term" value="F:DNA binding"/>
    <property type="evidence" value="ECO:0007669"/>
    <property type="project" value="UniProtKB-KW"/>
</dbReference>
<dbReference type="GO" id="GO:0008270">
    <property type="term" value="F:zinc ion binding"/>
    <property type="evidence" value="ECO:0007669"/>
    <property type="project" value="UniProtKB-KW"/>
</dbReference>
<dbReference type="GO" id="GO:0035282">
    <property type="term" value="P:segmentation"/>
    <property type="evidence" value="ECO:0007669"/>
    <property type="project" value="UniProtKB-KW"/>
</dbReference>
<proteinExistence type="inferred from homology"/>
<feature type="chain" id="PRO_0000046950" description="Protein hunchback">
    <location>
        <begin position="1" status="less than"/>
        <end position="192" status="greater than"/>
    </location>
</feature>
<feature type="region of interest" description="Disordered" evidence="2">
    <location>
        <begin position="16"/>
        <end position="59"/>
    </location>
</feature>
<feature type="region of interest" description="Disordered" evidence="2">
    <location>
        <begin position="88"/>
        <end position="108"/>
    </location>
</feature>
<feature type="region of interest" description="Disordered" evidence="2">
    <location>
        <begin position="151"/>
        <end position="192"/>
    </location>
</feature>
<feature type="compositionally biased region" description="Basic residues" evidence="2">
    <location>
        <begin position="17"/>
        <end position="31"/>
    </location>
</feature>
<feature type="compositionally biased region" description="Polar residues" evidence="2">
    <location>
        <begin position="92"/>
        <end position="103"/>
    </location>
</feature>
<feature type="compositionally biased region" description="Basic and acidic residues" evidence="2">
    <location>
        <begin position="173"/>
        <end position="192"/>
    </location>
</feature>
<feature type="non-consecutive residues" evidence="3">
    <location>
        <begin position="101"/>
        <end position="102"/>
    </location>
</feature>
<feature type="non-terminal residue">
    <location>
        <position position="1"/>
    </location>
</feature>
<feature type="non-terminal residue">
    <location>
        <position position="192"/>
    </location>
</feature>
<organism>
    <name type="scientific">Drosophila adiastola</name>
    <name type="common">Fruit fly</name>
    <name type="synonym">Idiomyia adiastola</name>
    <dbReference type="NCBI Taxonomy" id="7261"/>
    <lineage>
        <taxon>Eukaryota</taxon>
        <taxon>Metazoa</taxon>
        <taxon>Ecdysozoa</taxon>
        <taxon>Arthropoda</taxon>
        <taxon>Hexapoda</taxon>
        <taxon>Insecta</taxon>
        <taxon>Pterygota</taxon>
        <taxon>Neoptera</taxon>
        <taxon>Endopterygota</taxon>
        <taxon>Diptera</taxon>
        <taxon>Brachycera</taxon>
        <taxon>Muscomorpha</taxon>
        <taxon>Ephydroidea</taxon>
        <taxon>Drosophilidae</taxon>
        <taxon>Drosophila</taxon>
        <taxon>Hawaiian Drosophila</taxon>
    </lineage>
</organism>
<gene>
    <name type="primary">hb</name>
</gene>
<name>HUNB_DROAD</name>
<sequence length="192" mass="21174">WYSSMFAANIKQEPISHHHHHHHAHHSRRQHPHDSNSNSNASSPHQSPLPSPNPPSNTNLQLEQYLKHQQQQQQQQHQQQPMDTLCAAAMTPSPSNNDQNSPLTWPGLPNPMQSIMPANLRPSPNTTTTTPPAAAPAAATIALQANDKLQALTPPMDVTPPKSPAKSQQSCAEPEKEHDLMSNSSEDMKYMA</sequence>
<accession>O46232</accession>
<accession>O46233</accession>